<comment type="function">
    <text evidence="1">The glycine cleavage system catalyzes the degradation of glycine. The P protein binds the alpha-amino group of glycine through its pyridoxal phosphate cofactor; CO(2) is released and the remaining methylamine moiety is then transferred to the lipoamide cofactor of the H protein.</text>
</comment>
<comment type="catalytic activity">
    <reaction evidence="1">
        <text>N(6)-[(R)-lipoyl]-L-lysyl-[glycine-cleavage complex H protein] + glycine + H(+) = N(6)-[(R)-S(8)-aminomethyldihydrolipoyl]-L-lysyl-[glycine-cleavage complex H protein] + CO2</text>
        <dbReference type="Rhea" id="RHEA:24304"/>
        <dbReference type="Rhea" id="RHEA-COMP:10494"/>
        <dbReference type="Rhea" id="RHEA-COMP:10495"/>
        <dbReference type="ChEBI" id="CHEBI:15378"/>
        <dbReference type="ChEBI" id="CHEBI:16526"/>
        <dbReference type="ChEBI" id="CHEBI:57305"/>
        <dbReference type="ChEBI" id="CHEBI:83099"/>
        <dbReference type="ChEBI" id="CHEBI:83143"/>
        <dbReference type="EC" id="1.4.4.2"/>
    </reaction>
</comment>
<comment type="cofactor">
    <cofactor evidence="1">
        <name>pyridoxal 5'-phosphate</name>
        <dbReference type="ChEBI" id="CHEBI:597326"/>
    </cofactor>
</comment>
<comment type="subunit">
    <text evidence="1">The glycine cleavage system is composed of four proteins: P, T, L and H.</text>
</comment>
<comment type="similarity">
    <text evidence="1">Belongs to the GcvP family.</text>
</comment>
<gene>
    <name evidence="1" type="primary">gcvP</name>
    <name type="ordered locus">Ecok1_28380</name>
    <name type="ORF">APECO1_3625</name>
</gene>
<protein>
    <recommendedName>
        <fullName evidence="1">Glycine dehydrogenase (decarboxylating)</fullName>
        <ecNumber evidence="1">1.4.4.2</ecNumber>
    </recommendedName>
    <alternativeName>
        <fullName evidence="1">Glycine cleavage system P-protein</fullName>
    </alternativeName>
    <alternativeName>
        <fullName evidence="1">Glycine decarboxylase</fullName>
    </alternativeName>
    <alternativeName>
        <fullName evidence="1">Glycine dehydrogenase (aminomethyl-transferring)</fullName>
    </alternativeName>
</protein>
<proteinExistence type="inferred from homology"/>
<sequence>MTQTLSQLENSGAFIERHIGPDAAQQQEMLNAVGAQSLNALTGQIVPKDIQLATPPQVGAPATEYAALAELKAIASRNKRFTSYIGMGYTAVQLPPVILRNMLENPGWYTAYTPYQPEVSQGRLEALLNFQQVTLDLTGLDMASASLLDEATAAAEAMAMAKRVSKLKNANRFFVASDVHPQTLDVVRTRAETFGFEVIVDDAQKVLDHQDVFGVLLQQVGTTGEIHDYTALISELKSRKIVVSVAADIMALVLLTAPGKQGADIVFGSAQRFGVPMGYGGPHAAFFAAKDEYKRSMPGRIIGVSKDAAGNTALRMAMQTREQHIRREKANSNICTSQVLLTNIASLYAVYHGPVGLKRIANRIHRLTDILAAGLQQKGLKLRHAHYFDTLCVEVVDKAGVLARAEAAEINLRSDILNAVGITLDETTTRENVMQLFSVLLGDNHGLDIDTLDKDVAHDSRSIQAAMLRDDEILTHPVFNRYHSETEMMRYMHSLERKDLALNQAMIPLGSCTMKLNAAAEMIPITWPEFAELHPFCPPEQAEGYQQMIAQLADWLVKLTGYDAVCMQPNSGAQGEYAGLLAIRHYHESRNEGHRDICLIPASAHGTNPASAHMAGMQVVVVACDKNGNIDLTDLRAKAEQAGDNLSCIMVTYPSTHGVYEETIREVCEVVHQFGGQVYLDGANMNAQVGITSPGFIGADVSHLNLHKTFCIPHGGGGPGMGPIGVKAHLAPFVPGHSVVQIEGMLTRQGAVSAAPFGSASILPISWMYIRMMGAEGLKKASQVAILNANYIASRLQDAFPVLYTGRDGRVAHECILDIRPLKEETGISELDIAKRLIDYGFHAPTMSFPVAGTLMVEPTESESKVELDRFIDAMLAIRAEIDQVKAGVWPLEDNPLVNAPHIQSELVAEWAHPYSREVAVFPAGVADKYWPTVKRLDDVYGDRNLFCSCVPISEYQ</sequence>
<feature type="chain" id="PRO_1000045580" description="Glycine dehydrogenase (decarboxylating)">
    <location>
        <begin position="1"/>
        <end position="957"/>
    </location>
</feature>
<feature type="modified residue" description="N6-(pyridoxal phosphate)lysine" evidence="1">
    <location>
        <position position="708"/>
    </location>
</feature>
<reference key="1">
    <citation type="journal article" date="2007" name="J. Bacteriol.">
        <title>The genome sequence of avian pathogenic Escherichia coli strain O1:K1:H7 shares strong similarities with human extraintestinal pathogenic E. coli genomes.</title>
        <authorList>
            <person name="Johnson T.J."/>
            <person name="Kariyawasam S."/>
            <person name="Wannemuehler Y."/>
            <person name="Mangiamele P."/>
            <person name="Johnson S.J."/>
            <person name="Doetkott C."/>
            <person name="Skyberg J.A."/>
            <person name="Lynne A.M."/>
            <person name="Johnson J.R."/>
            <person name="Nolan L.K."/>
        </authorList>
    </citation>
    <scope>NUCLEOTIDE SEQUENCE [LARGE SCALE GENOMIC DNA]</scope>
</reference>
<dbReference type="EC" id="1.4.4.2" evidence="1"/>
<dbReference type="EMBL" id="CP000468">
    <property type="protein sequence ID" value="ABJ02332.1"/>
    <property type="molecule type" value="Genomic_DNA"/>
</dbReference>
<dbReference type="RefSeq" id="WP_000195075.1">
    <property type="nucleotide sequence ID" value="NC_008563.1"/>
</dbReference>
<dbReference type="SMR" id="A1AF92"/>
<dbReference type="KEGG" id="ecv:APECO1_3625"/>
<dbReference type="HOGENOM" id="CLU_004620_1_1_6"/>
<dbReference type="Proteomes" id="UP000008216">
    <property type="component" value="Chromosome"/>
</dbReference>
<dbReference type="GO" id="GO:0005829">
    <property type="term" value="C:cytosol"/>
    <property type="evidence" value="ECO:0007669"/>
    <property type="project" value="TreeGrafter"/>
</dbReference>
<dbReference type="GO" id="GO:0005960">
    <property type="term" value="C:glycine cleavage complex"/>
    <property type="evidence" value="ECO:0007669"/>
    <property type="project" value="TreeGrafter"/>
</dbReference>
<dbReference type="GO" id="GO:0016594">
    <property type="term" value="F:glycine binding"/>
    <property type="evidence" value="ECO:0007669"/>
    <property type="project" value="TreeGrafter"/>
</dbReference>
<dbReference type="GO" id="GO:0004375">
    <property type="term" value="F:glycine dehydrogenase (decarboxylating) activity"/>
    <property type="evidence" value="ECO:0007669"/>
    <property type="project" value="UniProtKB-EC"/>
</dbReference>
<dbReference type="GO" id="GO:0030170">
    <property type="term" value="F:pyridoxal phosphate binding"/>
    <property type="evidence" value="ECO:0007669"/>
    <property type="project" value="TreeGrafter"/>
</dbReference>
<dbReference type="GO" id="GO:0019464">
    <property type="term" value="P:glycine decarboxylation via glycine cleavage system"/>
    <property type="evidence" value="ECO:0007669"/>
    <property type="project" value="UniProtKB-UniRule"/>
</dbReference>
<dbReference type="CDD" id="cd00613">
    <property type="entry name" value="GDC-P"/>
    <property type="match status" value="2"/>
</dbReference>
<dbReference type="FunFam" id="3.40.640.10:FF:000005">
    <property type="entry name" value="Glycine dehydrogenase (decarboxylating), mitochondrial"/>
    <property type="match status" value="1"/>
</dbReference>
<dbReference type="FunFam" id="3.90.1150.10:FF:000007">
    <property type="entry name" value="Glycine dehydrogenase (decarboxylating), mitochondrial"/>
    <property type="match status" value="1"/>
</dbReference>
<dbReference type="FunFam" id="3.40.640.10:FF:000007">
    <property type="entry name" value="glycine dehydrogenase (Decarboxylating), mitochondrial"/>
    <property type="match status" value="1"/>
</dbReference>
<dbReference type="Gene3D" id="3.90.1150.10">
    <property type="entry name" value="Aspartate Aminotransferase, domain 1"/>
    <property type="match status" value="1"/>
</dbReference>
<dbReference type="Gene3D" id="3.40.640.10">
    <property type="entry name" value="Type I PLP-dependent aspartate aminotransferase-like (Major domain)"/>
    <property type="match status" value="2"/>
</dbReference>
<dbReference type="HAMAP" id="MF_00711">
    <property type="entry name" value="GcvP"/>
    <property type="match status" value="1"/>
</dbReference>
<dbReference type="InterPro" id="IPR003437">
    <property type="entry name" value="GcvP"/>
</dbReference>
<dbReference type="InterPro" id="IPR049316">
    <property type="entry name" value="GDC-P_C"/>
</dbReference>
<dbReference type="InterPro" id="IPR049315">
    <property type="entry name" value="GDC-P_N"/>
</dbReference>
<dbReference type="InterPro" id="IPR020581">
    <property type="entry name" value="GDC_P"/>
</dbReference>
<dbReference type="InterPro" id="IPR015424">
    <property type="entry name" value="PyrdxlP-dep_Trfase"/>
</dbReference>
<dbReference type="InterPro" id="IPR015421">
    <property type="entry name" value="PyrdxlP-dep_Trfase_major"/>
</dbReference>
<dbReference type="InterPro" id="IPR015422">
    <property type="entry name" value="PyrdxlP-dep_Trfase_small"/>
</dbReference>
<dbReference type="NCBIfam" id="TIGR00461">
    <property type="entry name" value="gcvP"/>
    <property type="match status" value="1"/>
</dbReference>
<dbReference type="NCBIfam" id="NF003346">
    <property type="entry name" value="PRK04366.1"/>
    <property type="match status" value="1"/>
</dbReference>
<dbReference type="PANTHER" id="PTHR11773:SF13">
    <property type="entry name" value="GLYCINE DEHYDROGENASE (DECARBOXYLATING)"/>
    <property type="match status" value="1"/>
</dbReference>
<dbReference type="PANTHER" id="PTHR11773">
    <property type="entry name" value="GLYCINE DEHYDROGENASE, DECARBOXYLATING"/>
    <property type="match status" value="1"/>
</dbReference>
<dbReference type="Pfam" id="PF21478">
    <property type="entry name" value="GcvP2_C"/>
    <property type="match status" value="1"/>
</dbReference>
<dbReference type="Pfam" id="PF02347">
    <property type="entry name" value="GDC-P"/>
    <property type="match status" value="2"/>
</dbReference>
<dbReference type="SUPFAM" id="SSF53383">
    <property type="entry name" value="PLP-dependent transferases"/>
    <property type="match status" value="2"/>
</dbReference>
<keyword id="KW-0560">Oxidoreductase</keyword>
<keyword id="KW-0663">Pyridoxal phosphate</keyword>
<keyword id="KW-1185">Reference proteome</keyword>
<evidence type="ECO:0000255" key="1">
    <source>
        <dbReference type="HAMAP-Rule" id="MF_00711"/>
    </source>
</evidence>
<organism>
    <name type="scientific">Escherichia coli O1:K1 / APEC</name>
    <dbReference type="NCBI Taxonomy" id="405955"/>
    <lineage>
        <taxon>Bacteria</taxon>
        <taxon>Pseudomonadati</taxon>
        <taxon>Pseudomonadota</taxon>
        <taxon>Gammaproteobacteria</taxon>
        <taxon>Enterobacterales</taxon>
        <taxon>Enterobacteriaceae</taxon>
        <taxon>Escherichia</taxon>
    </lineage>
</organism>
<name>GCSP_ECOK1</name>
<accession>A1AF92</accession>